<accession>A4VUH1</accession>
<organism>
    <name type="scientific">Streptococcus suis (strain 05ZYH33)</name>
    <dbReference type="NCBI Taxonomy" id="391295"/>
    <lineage>
        <taxon>Bacteria</taxon>
        <taxon>Bacillati</taxon>
        <taxon>Bacillota</taxon>
        <taxon>Bacilli</taxon>
        <taxon>Lactobacillales</taxon>
        <taxon>Streptococcaceae</taxon>
        <taxon>Streptococcus</taxon>
    </lineage>
</organism>
<keyword id="KW-0963">Cytoplasm</keyword>
<keyword id="KW-0378">Hydrolase</keyword>
<keyword id="KW-0645">Protease</keyword>
<keyword id="KW-0788">Thiol protease</keyword>
<reference key="1">
    <citation type="journal article" date="2007" name="PLoS ONE">
        <title>A glimpse of streptococcal toxic shock syndrome from comparative genomics of S. suis 2 Chinese isolates.</title>
        <authorList>
            <person name="Chen C."/>
            <person name="Tang J."/>
            <person name="Dong W."/>
            <person name="Wang C."/>
            <person name="Feng Y."/>
            <person name="Wang J."/>
            <person name="Zheng F."/>
            <person name="Pan X."/>
            <person name="Liu D."/>
            <person name="Li M."/>
            <person name="Song Y."/>
            <person name="Zhu X."/>
            <person name="Sun H."/>
            <person name="Feng T."/>
            <person name="Guo Z."/>
            <person name="Ju A."/>
            <person name="Ge J."/>
            <person name="Dong Y."/>
            <person name="Sun W."/>
            <person name="Jiang Y."/>
            <person name="Wang J."/>
            <person name="Yan J."/>
            <person name="Yang H."/>
            <person name="Wang X."/>
            <person name="Gao G.F."/>
            <person name="Yang R."/>
            <person name="Wang J."/>
            <person name="Yu J."/>
        </authorList>
    </citation>
    <scope>NUCLEOTIDE SEQUENCE [LARGE SCALE GENOMIC DNA]</scope>
    <source>
        <strain>05ZYH33</strain>
    </source>
</reference>
<dbReference type="EC" id="3.4.19.3" evidence="1"/>
<dbReference type="EMBL" id="CP000407">
    <property type="protein sequence ID" value="ABP89760.1"/>
    <property type="molecule type" value="Genomic_DNA"/>
</dbReference>
<dbReference type="SMR" id="A4VUH1"/>
<dbReference type="STRING" id="391295.SSU05_0794"/>
<dbReference type="MEROPS" id="C15.001"/>
<dbReference type="KEGG" id="ssu:SSU05_0794"/>
<dbReference type="eggNOG" id="COG2039">
    <property type="taxonomic scope" value="Bacteria"/>
</dbReference>
<dbReference type="HOGENOM" id="CLU_043960_4_0_9"/>
<dbReference type="GO" id="GO:0005829">
    <property type="term" value="C:cytosol"/>
    <property type="evidence" value="ECO:0007669"/>
    <property type="project" value="InterPro"/>
</dbReference>
<dbReference type="GO" id="GO:0016920">
    <property type="term" value="F:pyroglutamyl-peptidase activity"/>
    <property type="evidence" value="ECO:0007669"/>
    <property type="project" value="UniProtKB-UniRule"/>
</dbReference>
<dbReference type="GO" id="GO:0006508">
    <property type="term" value="P:proteolysis"/>
    <property type="evidence" value="ECO:0007669"/>
    <property type="project" value="UniProtKB-KW"/>
</dbReference>
<dbReference type="CDD" id="cd00501">
    <property type="entry name" value="Peptidase_C15"/>
    <property type="match status" value="1"/>
</dbReference>
<dbReference type="FunFam" id="3.40.630.20:FF:000001">
    <property type="entry name" value="Pyrrolidone-carboxylate peptidase"/>
    <property type="match status" value="1"/>
</dbReference>
<dbReference type="Gene3D" id="3.40.630.20">
    <property type="entry name" value="Peptidase C15, pyroglutamyl peptidase I-like"/>
    <property type="match status" value="1"/>
</dbReference>
<dbReference type="HAMAP" id="MF_00417">
    <property type="entry name" value="Pyrrolid_peptidase"/>
    <property type="match status" value="1"/>
</dbReference>
<dbReference type="InterPro" id="IPR000816">
    <property type="entry name" value="Peptidase_C15"/>
</dbReference>
<dbReference type="InterPro" id="IPR016125">
    <property type="entry name" value="Peptidase_C15-like"/>
</dbReference>
<dbReference type="InterPro" id="IPR036440">
    <property type="entry name" value="Peptidase_C15-like_sf"/>
</dbReference>
<dbReference type="InterPro" id="IPR029762">
    <property type="entry name" value="PGP-I_bact-type"/>
</dbReference>
<dbReference type="InterPro" id="IPR033694">
    <property type="entry name" value="PGPEP1_Cys_AS"/>
</dbReference>
<dbReference type="InterPro" id="IPR033693">
    <property type="entry name" value="PGPEP1_Glu_AS"/>
</dbReference>
<dbReference type="NCBIfam" id="NF009676">
    <property type="entry name" value="PRK13197.1"/>
    <property type="match status" value="1"/>
</dbReference>
<dbReference type="NCBIfam" id="TIGR00504">
    <property type="entry name" value="pyro_pdase"/>
    <property type="match status" value="1"/>
</dbReference>
<dbReference type="PANTHER" id="PTHR23402">
    <property type="entry name" value="PROTEASE FAMILY C15 PYROGLUTAMYL-PEPTIDASE I-RELATED"/>
    <property type="match status" value="1"/>
</dbReference>
<dbReference type="PANTHER" id="PTHR23402:SF1">
    <property type="entry name" value="PYROGLUTAMYL-PEPTIDASE I"/>
    <property type="match status" value="1"/>
</dbReference>
<dbReference type="Pfam" id="PF01470">
    <property type="entry name" value="Peptidase_C15"/>
    <property type="match status" value="1"/>
</dbReference>
<dbReference type="PIRSF" id="PIRSF015592">
    <property type="entry name" value="Prld-crbxl_pptds"/>
    <property type="match status" value="1"/>
</dbReference>
<dbReference type="PRINTS" id="PR00706">
    <property type="entry name" value="PYROGLUPTASE"/>
</dbReference>
<dbReference type="SUPFAM" id="SSF53182">
    <property type="entry name" value="Pyrrolidone carboxyl peptidase (pyroglutamate aminopeptidase)"/>
    <property type="match status" value="1"/>
</dbReference>
<dbReference type="PROSITE" id="PS01334">
    <property type="entry name" value="PYRASE_CYS"/>
    <property type="match status" value="1"/>
</dbReference>
<dbReference type="PROSITE" id="PS01333">
    <property type="entry name" value="PYRASE_GLU"/>
    <property type="match status" value="1"/>
</dbReference>
<gene>
    <name evidence="1" type="primary">pcp</name>
    <name type="ordered locus">SSU05_0794</name>
</gene>
<name>PCP_STRSY</name>
<protein>
    <recommendedName>
        <fullName evidence="1">Pyrrolidone-carboxylate peptidase</fullName>
        <ecNumber evidence="1">3.4.19.3</ecNumber>
    </recommendedName>
    <alternativeName>
        <fullName evidence="1">5-oxoprolyl-peptidase</fullName>
    </alternativeName>
    <alternativeName>
        <fullName evidence="1">Pyroglutamyl-peptidase I</fullName>
        <shortName evidence="1">PGP-I</shortName>
        <shortName evidence="1">Pyrase</shortName>
    </alternativeName>
</protein>
<proteinExistence type="inferred from homology"/>
<feature type="chain" id="PRO_1000050151" description="Pyrrolidone-carboxylate peptidase">
    <location>
        <begin position="1"/>
        <end position="215"/>
    </location>
</feature>
<feature type="active site" evidence="1">
    <location>
        <position position="78"/>
    </location>
</feature>
<feature type="active site" evidence="1">
    <location>
        <position position="141"/>
    </location>
</feature>
<feature type="active site" evidence="1">
    <location>
        <position position="165"/>
    </location>
</feature>
<sequence>MKIIVTGFDPFGGEPINPALETIKSLPKTIAGAEIILVEIPTVFDKAADVLEEKMAEHLPDAVLCIGQAGGRVDLTPERIAINQDDARIPDNEGQQPIDRTIREDGQPAYFSTLPIKAMVEAIHRIGLPASVSNTAGTFVCNHLMYQALYLAEKQFPKTKAGFLHIPFLPEQVVDKPGLASMSLNDIVRGVEVAIGAIVEYRDKEDIKKGGGSTH</sequence>
<comment type="function">
    <text evidence="1">Removes 5-oxoproline from various penultimate amino acid residues except L-proline.</text>
</comment>
<comment type="catalytic activity">
    <reaction evidence="1">
        <text>Release of an N-terminal pyroglutamyl group from a polypeptide, the second amino acid generally not being Pro.</text>
        <dbReference type="EC" id="3.4.19.3"/>
    </reaction>
</comment>
<comment type="subunit">
    <text evidence="1">Homotetramer.</text>
</comment>
<comment type="subcellular location">
    <subcellularLocation>
        <location evidence="1">Cytoplasm</location>
    </subcellularLocation>
</comment>
<comment type="similarity">
    <text evidence="1">Belongs to the peptidase C15 family.</text>
</comment>
<evidence type="ECO:0000255" key="1">
    <source>
        <dbReference type="HAMAP-Rule" id="MF_00417"/>
    </source>
</evidence>